<proteinExistence type="inferred from homology"/>
<accession>D6C4K6</accession>
<comment type="subcellular location">
    <subcellularLocation>
        <location evidence="1">Secreted</location>
    </subcellularLocation>
</comment>
<comment type="tissue specificity">
    <text>Expressed by the venom duct.</text>
</comment>
<comment type="domain">
    <text evidence="1">The presence of a 'disulfide through disulfide knot' structurally defines this protein as a knottin.</text>
</comment>
<comment type="domain">
    <text>The cysteine framework is VI/VII (C-C-CC-C-C).</text>
</comment>
<dbReference type="EMBL" id="FJ959148">
    <property type="protein sequence ID" value="ADB93118.1"/>
    <property type="molecule type" value="Genomic_DNA"/>
</dbReference>
<dbReference type="SMR" id="D6C4K6"/>
<dbReference type="ConoServer" id="4032">
    <property type="toxin name" value="Cal6.16"/>
</dbReference>
<dbReference type="GO" id="GO:0005576">
    <property type="term" value="C:extracellular region"/>
    <property type="evidence" value="ECO:0007669"/>
    <property type="project" value="UniProtKB-SubCell"/>
</dbReference>
<dbReference type="GO" id="GO:0090729">
    <property type="term" value="F:toxin activity"/>
    <property type="evidence" value="ECO:0007669"/>
    <property type="project" value="UniProtKB-KW"/>
</dbReference>
<reference key="1">
    <citation type="journal article" date="2010" name="Mol. Phylogenet. Evol.">
        <title>Evolution of Conus peptide toxins: analysis of Conus californicus Reeve, 1844.</title>
        <authorList>
            <person name="Biggs J.S."/>
            <person name="Watkins M."/>
            <person name="Puillandre N."/>
            <person name="Ownby J.P."/>
            <person name="Lopez-Vera E."/>
            <person name="Christensen S."/>
            <person name="Moreno K.J."/>
            <person name="Bernaldez J."/>
            <person name="Licea-Navarro A."/>
            <person name="Corneli P.S."/>
            <person name="Olivera B.M."/>
        </authorList>
    </citation>
    <scope>NUCLEOTIDE SEQUENCE [GENOMIC DNA]</scope>
</reference>
<name>U6G_CONCL</name>
<protein>
    <recommendedName>
        <fullName>Conotoxin Cl6.16</fullName>
    </recommendedName>
</protein>
<keyword id="KW-1015">Disulfide bond</keyword>
<keyword id="KW-0960">Knottin</keyword>
<keyword id="KW-0528">Neurotoxin</keyword>
<keyword id="KW-0964">Secreted</keyword>
<keyword id="KW-0800">Toxin</keyword>
<sequence length="35" mass="4010">QWPFQQWAPCTGHWDCPGDRCCFAGYCLETTPSCD</sequence>
<evidence type="ECO:0000250" key="1"/>
<feature type="peptide" id="PRO_0000415005" description="Conotoxin Cl6.16">
    <location>
        <begin position="1" status="less than"/>
        <end position="35"/>
    </location>
</feature>
<feature type="disulfide bond" evidence="1">
    <location>
        <begin position="10"/>
        <end position="22"/>
    </location>
</feature>
<feature type="disulfide bond" evidence="1">
    <location>
        <begin position="16"/>
        <end position="27"/>
    </location>
</feature>
<feature type="disulfide bond" evidence="1">
    <location>
        <begin position="21"/>
        <end position="34"/>
    </location>
</feature>
<feature type="non-terminal residue">
    <location>
        <position position="1"/>
    </location>
</feature>
<organism>
    <name type="scientific">Californiconus californicus</name>
    <name type="common">California cone</name>
    <name type="synonym">Conus californicus</name>
    <dbReference type="NCBI Taxonomy" id="1736779"/>
    <lineage>
        <taxon>Eukaryota</taxon>
        <taxon>Metazoa</taxon>
        <taxon>Spiralia</taxon>
        <taxon>Lophotrochozoa</taxon>
        <taxon>Mollusca</taxon>
        <taxon>Gastropoda</taxon>
        <taxon>Caenogastropoda</taxon>
        <taxon>Neogastropoda</taxon>
        <taxon>Conoidea</taxon>
        <taxon>Conidae</taxon>
        <taxon>Californiconus</taxon>
    </lineage>
</organism>